<name>XERC_ECOK1</name>
<sequence length="298" mass="33891">MTDLHTDVERYLRYLSVERQLSPITLLNYQRQLEAIIHFASENGLQSWQQCDVTMVRNFAVRSRRKGLGAASLALRLSALRSFFDWLVSQNELKANPAKGVSAPKAPRHLPKNIDVDDMNRLLDIDINDPLAVRDRAMLEVMYGAGLRLSELVGLDIKHLDLESGEVWVMGKGSKERRLPIGRNAVAWIEHWLDLRDLFGSEDDALFLSKLGKRISARNVQKRFAEWGIKQGLNNHVHPHKLRHSFATHMLESSGDLRGVQELLGHANLSTTQIYTHLDFQHLASVYDAAHPRAKRGK</sequence>
<dbReference type="EMBL" id="CP000468">
    <property type="protein sequence ID" value="ABJ03269.1"/>
    <property type="molecule type" value="Genomic_DNA"/>
</dbReference>
<dbReference type="RefSeq" id="WP_000130676.1">
    <property type="nucleotide sequence ID" value="NZ_CADILS010000071.1"/>
</dbReference>
<dbReference type="SMR" id="A1AHX9"/>
<dbReference type="KEGG" id="ecv:APECO1_2665"/>
<dbReference type="HOGENOM" id="CLU_027562_9_0_6"/>
<dbReference type="Proteomes" id="UP000008216">
    <property type="component" value="Chromosome"/>
</dbReference>
<dbReference type="GO" id="GO:0005737">
    <property type="term" value="C:cytoplasm"/>
    <property type="evidence" value="ECO:0007669"/>
    <property type="project" value="UniProtKB-SubCell"/>
</dbReference>
<dbReference type="GO" id="GO:0003677">
    <property type="term" value="F:DNA binding"/>
    <property type="evidence" value="ECO:0007669"/>
    <property type="project" value="UniProtKB-KW"/>
</dbReference>
<dbReference type="GO" id="GO:0009037">
    <property type="term" value="F:tyrosine-based site-specific recombinase activity"/>
    <property type="evidence" value="ECO:0007669"/>
    <property type="project" value="UniProtKB-UniRule"/>
</dbReference>
<dbReference type="GO" id="GO:0051301">
    <property type="term" value="P:cell division"/>
    <property type="evidence" value="ECO:0007669"/>
    <property type="project" value="UniProtKB-KW"/>
</dbReference>
<dbReference type="GO" id="GO:0007059">
    <property type="term" value="P:chromosome segregation"/>
    <property type="evidence" value="ECO:0007669"/>
    <property type="project" value="UniProtKB-UniRule"/>
</dbReference>
<dbReference type="GO" id="GO:0006313">
    <property type="term" value="P:DNA transposition"/>
    <property type="evidence" value="ECO:0007669"/>
    <property type="project" value="UniProtKB-UniRule"/>
</dbReference>
<dbReference type="CDD" id="cd00798">
    <property type="entry name" value="INT_XerDC_C"/>
    <property type="match status" value="1"/>
</dbReference>
<dbReference type="FunFam" id="1.10.443.10:FF:000002">
    <property type="entry name" value="Tyrosine recombinase XerC"/>
    <property type="match status" value="1"/>
</dbReference>
<dbReference type="Gene3D" id="1.10.150.130">
    <property type="match status" value="1"/>
</dbReference>
<dbReference type="Gene3D" id="1.10.443.10">
    <property type="entry name" value="Intergrase catalytic core"/>
    <property type="match status" value="1"/>
</dbReference>
<dbReference type="HAMAP" id="MF_01808">
    <property type="entry name" value="Recomb_XerC_XerD"/>
    <property type="match status" value="1"/>
</dbReference>
<dbReference type="InterPro" id="IPR044068">
    <property type="entry name" value="CB"/>
</dbReference>
<dbReference type="InterPro" id="IPR011010">
    <property type="entry name" value="DNA_brk_join_enz"/>
</dbReference>
<dbReference type="InterPro" id="IPR013762">
    <property type="entry name" value="Integrase-like_cat_sf"/>
</dbReference>
<dbReference type="InterPro" id="IPR002104">
    <property type="entry name" value="Integrase_catalytic"/>
</dbReference>
<dbReference type="InterPro" id="IPR010998">
    <property type="entry name" value="Integrase_recombinase_N"/>
</dbReference>
<dbReference type="InterPro" id="IPR004107">
    <property type="entry name" value="Integrase_SAM-like_N"/>
</dbReference>
<dbReference type="InterPro" id="IPR011931">
    <property type="entry name" value="Recomb_XerC"/>
</dbReference>
<dbReference type="InterPro" id="IPR023009">
    <property type="entry name" value="Tyrosine_recombinase_XerC/XerD"/>
</dbReference>
<dbReference type="InterPro" id="IPR050090">
    <property type="entry name" value="Tyrosine_recombinase_XerCD"/>
</dbReference>
<dbReference type="NCBIfam" id="NF001399">
    <property type="entry name" value="PRK00283.1"/>
    <property type="match status" value="1"/>
</dbReference>
<dbReference type="NCBIfam" id="TIGR02224">
    <property type="entry name" value="recomb_XerC"/>
    <property type="match status" value="1"/>
</dbReference>
<dbReference type="PANTHER" id="PTHR30349">
    <property type="entry name" value="PHAGE INTEGRASE-RELATED"/>
    <property type="match status" value="1"/>
</dbReference>
<dbReference type="PANTHER" id="PTHR30349:SF81">
    <property type="entry name" value="TYROSINE RECOMBINASE XERC"/>
    <property type="match status" value="1"/>
</dbReference>
<dbReference type="Pfam" id="PF02899">
    <property type="entry name" value="Phage_int_SAM_1"/>
    <property type="match status" value="1"/>
</dbReference>
<dbReference type="Pfam" id="PF00589">
    <property type="entry name" value="Phage_integrase"/>
    <property type="match status" value="1"/>
</dbReference>
<dbReference type="SUPFAM" id="SSF56349">
    <property type="entry name" value="DNA breaking-rejoining enzymes"/>
    <property type="match status" value="1"/>
</dbReference>
<dbReference type="SUPFAM" id="SSF47823">
    <property type="entry name" value="lambda integrase-like, N-terminal domain"/>
    <property type="match status" value="1"/>
</dbReference>
<dbReference type="PROSITE" id="PS51900">
    <property type="entry name" value="CB"/>
    <property type="match status" value="1"/>
</dbReference>
<dbReference type="PROSITE" id="PS51898">
    <property type="entry name" value="TYR_RECOMBINASE"/>
    <property type="match status" value="1"/>
</dbReference>
<keyword id="KW-0131">Cell cycle</keyword>
<keyword id="KW-0132">Cell division</keyword>
<keyword id="KW-0159">Chromosome partition</keyword>
<keyword id="KW-0963">Cytoplasm</keyword>
<keyword id="KW-0229">DNA integration</keyword>
<keyword id="KW-0233">DNA recombination</keyword>
<keyword id="KW-0238">DNA-binding</keyword>
<keyword id="KW-1185">Reference proteome</keyword>
<accession>A1AHX9</accession>
<evidence type="ECO:0000255" key="1">
    <source>
        <dbReference type="HAMAP-Rule" id="MF_01808"/>
    </source>
</evidence>
<evidence type="ECO:0000255" key="2">
    <source>
        <dbReference type="PROSITE-ProRule" id="PRU01246"/>
    </source>
</evidence>
<evidence type="ECO:0000255" key="3">
    <source>
        <dbReference type="PROSITE-ProRule" id="PRU01248"/>
    </source>
</evidence>
<reference key="1">
    <citation type="journal article" date="2007" name="J. Bacteriol.">
        <title>The genome sequence of avian pathogenic Escherichia coli strain O1:K1:H7 shares strong similarities with human extraintestinal pathogenic E. coli genomes.</title>
        <authorList>
            <person name="Johnson T.J."/>
            <person name="Kariyawasam S."/>
            <person name="Wannemuehler Y."/>
            <person name="Mangiamele P."/>
            <person name="Johnson S.J."/>
            <person name="Doetkott C."/>
            <person name="Skyberg J.A."/>
            <person name="Lynne A.M."/>
            <person name="Johnson J.R."/>
            <person name="Nolan L.K."/>
        </authorList>
    </citation>
    <scope>NUCLEOTIDE SEQUENCE [LARGE SCALE GENOMIC DNA]</scope>
</reference>
<proteinExistence type="inferred from homology"/>
<comment type="function">
    <text evidence="1">Site-specific tyrosine recombinase, which acts by catalyzing the cutting and rejoining of the recombining DNA molecules. Binds cooperatively to specific DNA consensus sequences that are separated from XerD binding sites by a short central region, forming the heterotetrameric XerC-XerD complex that recombines DNA substrates. The complex is essential to convert dimers of the bacterial chromosome into monomers to permit their segregation at cell division. It also contributes to the segregational stability of plasmids. In the complex XerC specifically exchanges the top DNA strands.</text>
</comment>
<comment type="activity regulation">
    <text evidence="1">FtsK may regulate the catalytic switch between XerC and XerD in the heterotetrameric complex during the two steps of the recombination process.</text>
</comment>
<comment type="subunit">
    <text evidence="1">Forms a cyclic heterotetrameric complex composed of two molecules of XerC and two molecules of XerD, in which XerC interacts with XerD via its C-terminal region, XerD interacts with XerC via its C-terminal region and so on.</text>
</comment>
<comment type="subcellular location">
    <subcellularLocation>
        <location evidence="1">Cytoplasm</location>
    </subcellularLocation>
</comment>
<comment type="similarity">
    <text evidence="1">Belongs to the 'phage' integrase family. XerC subfamily.</text>
</comment>
<protein>
    <recommendedName>
        <fullName evidence="1">Tyrosine recombinase XerC</fullName>
    </recommendedName>
</protein>
<organism>
    <name type="scientific">Escherichia coli O1:K1 / APEC</name>
    <dbReference type="NCBI Taxonomy" id="405955"/>
    <lineage>
        <taxon>Bacteria</taxon>
        <taxon>Pseudomonadati</taxon>
        <taxon>Pseudomonadota</taxon>
        <taxon>Gammaproteobacteria</taxon>
        <taxon>Enterobacterales</taxon>
        <taxon>Enterobacteriaceae</taxon>
        <taxon>Escherichia</taxon>
    </lineage>
</organism>
<feature type="chain" id="PRO_1000070001" description="Tyrosine recombinase XerC">
    <location>
        <begin position="1"/>
        <end position="298"/>
    </location>
</feature>
<feature type="domain" description="Core-binding (CB)" evidence="3">
    <location>
        <begin position="2"/>
        <end position="88"/>
    </location>
</feature>
<feature type="domain" description="Tyr recombinase" evidence="2">
    <location>
        <begin position="109"/>
        <end position="288"/>
    </location>
</feature>
<feature type="active site" evidence="1">
    <location>
        <position position="148"/>
    </location>
</feature>
<feature type="active site" evidence="1">
    <location>
        <position position="172"/>
    </location>
</feature>
<feature type="active site" evidence="1">
    <location>
        <position position="240"/>
    </location>
</feature>
<feature type="active site" evidence="1">
    <location>
        <position position="243"/>
    </location>
</feature>
<feature type="active site" evidence="1">
    <location>
        <position position="266"/>
    </location>
</feature>
<feature type="active site" description="O-(3'-phospho-DNA)-tyrosine intermediate" evidence="1">
    <location>
        <position position="275"/>
    </location>
</feature>
<gene>
    <name evidence="1" type="primary">xerC</name>
    <name type="ordered locus">Ecok1_37750</name>
    <name type="ORF">APECO1_2665</name>
</gene>